<organism>
    <name type="scientific">Escherichia coli O26:H11 (strain 11368 / EHEC)</name>
    <dbReference type="NCBI Taxonomy" id="573235"/>
    <lineage>
        <taxon>Bacteria</taxon>
        <taxon>Pseudomonadati</taxon>
        <taxon>Pseudomonadota</taxon>
        <taxon>Gammaproteobacteria</taxon>
        <taxon>Enterobacterales</taxon>
        <taxon>Enterobacteriaceae</taxon>
        <taxon>Escherichia</taxon>
    </lineage>
</organism>
<feature type="chain" id="PRO_0000402677" description="Ureidoacrylate amidohydrolase RutB">
    <location>
        <begin position="1"/>
        <end position="230"/>
    </location>
</feature>
<feature type="active site" description="Proton acceptor" evidence="1">
    <location>
        <position position="24"/>
    </location>
</feature>
<feature type="active site" evidence="1">
    <location>
        <position position="133"/>
    </location>
</feature>
<feature type="active site" description="Nucleophile" evidence="1">
    <location>
        <position position="166"/>
    </location>
</feature>
<gene>
    <name evidence="1" type="primary">rutB</name>
    <name type="ordered locus">ECO26_1249</name>
</gene>
<evidence type="ECO:0000255" key="1">
    <source>
        <dbReference type="HAMAP-Rule" id="MF_00830"/>
    </source>
</evidence>
<reference key="1">
    <citation type="journal article" date="2009" name="Proc. Natl. Acad. Sci. U.S.A.">
        <title>Comparative genomics reveal the mechanism of the parallel evolution of O157 and non-O157 enterohemorrhagic Escherichia coli.</title>
        <authorList>
            <person name="Ogura Y."/>
            <person name="Ooka T."/>
            <person name="Iguchi A."/>
            <person name="Toh H."/>
            <person name="Asadulghani M."/>
            <person name="Oshima K."/>
            <person name="Kodama T."/>
            <person name="Abe H."/>
            <person name="Nakayama K."/>
            <person name="Kurokawa K."/>
            <person name="Tobe T."/>
            <person name="Hattori M."/>
            <person name="Hayashi T."/>
        </authorList>
    </citation>
    <scope>NUCLEOTIDE SEQUENCE [LARGE SCALE GENOMIC DNA]</scope>
    <source>
        <strain>11368 / EHEC</strain>
    </source>
</reference>
<comment type="function">
    <text evidence="1">Hydrolyzes ureidoacrylate to form aminoacrylate and carbamate. The carbamate hydrolyzes spontaneously, thereby releasing one of the nitrogen atoms of the pyrimidine ring as ammonia and one of its carbon atoms as CO2.</text>
</comment>
<comment type="catalytic activity">
    <reaction evidence="1">
        <text>(Z)-3-ureidoacrylate + H2O + H(+) = (Z)-3-aminoacrylate + NH4(+) + CO2</text>
        <dbReference type="Rhea" id="RHEA:42624"/>
        <dbReference type="ChEBI" id="CHEBI:15377"/>
        <dbReference type="ChEBI" id="CHEBI:15378"/>
        <dbReference type="ChEBI" id="CHEBI:16526"/>
        <dbReference type="ChEBI" id="CHEBI:28938"/>
        <dbReference type="ChEBI" id="CHEBI:59891"/>
        <dbReference type="ChEBI" id="CHEBI:59894"/>
        <dbReference type="EC" id="3.5.1.110"/>
    </reaction>
</comment>
<comment type="catalytic activity">
    <reaction evidence="1">
        <text>(Z)-3-ureidoacrylate + H2O = (Z)-3-aminoacrylate + carbamate + H(+)</text>
        <dbReference type="Rhea" id="RHEA:31603"/>
        <dbReference type="ChEBI" id="CHEBI:13941"/>
        <dbReference type="ChEBI" id="CHEBI:15377"/>
        <dbReference type="ChEBI" id="CHEBI:15378"/>
        <dbReference type="ChEBI" id="CHEBI:59891"/>
        <dbReference type="ChEBI" id="CHEBI:59894"/>
    </reaction>
</comment>
<comment type="catalytic activity">
    <reaction evidence="1">
        <text>(Z)-2-methylureidoacrylate + H2O + H(+) = (Z)-2-methylaminoacrylate + NH4(+) + CO2</text>
        <dbReference type="Rhea" id="RHEA:42620"/>
        <dbReference type="ChEBI" id="CHEBI:15377"/>
        <dbReference type="ChEBI" id="CHEBI:15378"/>
        <dbReference type="ChEBI" id="CHEBI:16526"/>
        <dbReference type="ChEBI" id="CHEBI:28938"/>
        <dbReference type="ChEBI" id="CHEBI:143783"/>
        <dbReference type="ChEBI" id="CHEBI:145735"/>
        <dbReference type="EC" id="3.5.1.110"/>
    </reaction>
</comment>
<comment type="induction">
    <text evidence="1">Up-regulated by the nitrogen regulatory protein C (NtrC also called GlnG) and repressed by RutR.</text>
</comment>
<comment type="similarity">
    <text evidence="1">Belongs to the isochorismatase family. RutB subfamily.</text>
</comment>
<keyword id="KW-0378">Hydrolase</keyword>
<name>RUTB_ECO26</name>
<protein>
    <recommendedName>
        <fullName evidence="1">Ureidoacrylate amidohydrolase RutB</fullName>
        <ecNumber evidence="1">3.5.1.110</ecNumber>
    </recommendedName>
</protein>
<dbReference type="EC" id="3.5.1.110" evidence="1"/>
<dbReference type="EMBL" id="AP010953">
    <property type="protein sequence ID" value="BAI24561.1"/>
    <property type="molecule type" value="Genomic_DNA"/>
</dbReference>
<dbReference type="RefSeq" id="WP_001307708.1">
    <property type="nucleotide sequence ID" value="NC_013361.1"/>
</dbReference>
<dbReference type="SMR" id="C8TNC1"/>
<dbReference type="GeneID" id="93776399"/>
<dbReference type="KEGG" id="eoj:ECO26_1249"/>
<dbReference type="HOGENOM" id="CLU_068979_8_0_6"/>
<dbReference type="GO" id="GO:0016811">
    <property type="term" value="F:hydrolase activity, acting on carbon-nitrogen (but not peptide) bonds, in linear amides"/>
    <property type="evidence" value="ECO:0007669"/>
    <property type="project" value="UniProtKB-UniRule"/>
</dbReference>
<dbReference type="GO" id="GO:0019740">
    <property type="term" value="P:nitrogen utilization"/>
    <property type="evidence" value="ECO:0007669"/>
    <property type="project" value="UniProtKB-UniRule"/>
</dbReference>
<dbReference type="GO" id="GO:0006212">
    <property type="term" value="P:uracil catabolic process"/>
    <property type="evidence" value="ECO:0007669"/>
    <property type="project" value="UniProtKB-UniRule"/>
</dbReference>
<dbReference type="CDD" id="cd00431">
    <property type="entry name" value="cysteine_hydrolases"/>
    <property type="match status" value="1"/>
</dbReference>
<dbReference type="FunFam" id="3.40.50.850:FF:000004">
    <property type="entry name" value="Peroxyureidoacrylate/ureidoacrylate amidohydrolase RutB"/>
    <property type="match status" value="1"/>
</dbReference>
<dbReference type="Gene3D" id="3.40.50.850">
    <property type="entry name" value="Isochorismatase-like"/>
    <property type="match status" value="1"/>
</dbReference>
<dbReference type="HAMAP" id="MF_00830">
    <property type="entry name" value="RutB"/>
    <property type="match status" value="1"/>
</dbReference>
<dbReference type="InterPro" id="IPR000868">
    <property type="entry name" value="Isochorismatase-like_dom"/>
</dbReference>
<dbReference type="InterPro" id="IPR050272">
    <property type="entry name" value="Isochorismatase-like_hydrls"/>
</dbReference>
<dbReference type="InterPro" id="IPR036380">
    <property type="entry name" value="Isochorismatase-like_sf"/>
</dbReference>
<dbReference type="InterPro" id="IPR019916">
    <property type="entry name" value="RutB"/>
</dbReference>
<dbReference type="NCBIfam" id="TIGR03614">
    <property type="entry name" value="RutB"/>
    <property type="match status" value="1"/>
</dbReference>
<dbReference type="PANTHER" id="PTHR43540:SF6">
    <property type="entry name" value="ISOCHORISMATASE-LIKE DOMAIN-CONTAINING PROTEIN"/>
    <property type="match status" value="1"/>
</dbReference>
<dbReference type="PANTHER" id="PTHR43540">
    <property type="entry name" value="PEROXYUREIDOACRYLATE/UREIDOACRYLATE AMIDOHYDROLASE-RELATED"/>
    <property type="match status" value="1"/>
</dbReference>
<dbReference type="Pfam" id="PF00857">
    <property type="entry name" value="Isochorismatase"/>
    <property type="match status" value="1"/>
</dbReference>
<dbReference type="SUPFAM" id="SSF52499">
    <property type="entry name" value="Isochorismatase-like hydrolases"/>
    <property type="match status" value="1"/>
</dbReference>
<proteinExistence type="inferred from homology"/>
<sequence>MTTLTARPEAITFDPQQSALIVVDMQNAYATPGGYLDLAGFDVSTTRPVIANIQTAVTAARAAGMLIIWFQNGWDEQYVEAGGPGSPNFHKSNALKTMRKQPQLQGKLLAKGSWDYQLVDELVPQPGDIVLPKPRYSGFFNTPLDSILRSRGIRHLVFTGIATNVCVESTLRDGFFLEYFGVVLEDATHQAGPEFAQKAALFNIETFFGWVSDVETFCDALSPTSFARIA</sequence>
<accession>C8TNC1</accession>